<gene>
    <name evidence="1" type="primary">minE</name>
    <name type="ordered locus">PMI1168</name>
</gene>
<keyword id="KW-0131">Cell cycle</keyword>
<keyword id="KW-0132">Cell division</keyword>
<keyword id="KW-1185">Reference proteome</keyword>
<accession>B4EVV5</accession>
<proteinExistence type="inferred from homology"/>
<comment type="function">
    <text evidence="1">Prevents the cell division inhibition by proteins MinC and MinD at internal division sites while permitting inhibition at polar sites. This ensures cell division at the proper site by restricting the formation of a division septum at the midpoint of the long axis of the cell.</text>
</comment>
<comment type="similarity">
    <text evidence="1">Belongs to the MinE family.</text>
</comment>
<organism>
    <name type="scientific">Proteus mirabilis (strain HI4320)</name>
    <dbReference type="NCBI Taxonomy" id="529507"/>
    <lineage>
        <taxon>Bacteria</taxon>
        <taxon>Pseudomonadati</taxon>
        <taxon>Pseudomonadota</taxon>
        <taxon>Gammaproteobacteria</taxon>
        <taxon>Enterobacterales</taxon>
        <taxon>Morganellaceae</taxon>
        <taxon>Proteus</taxon>
    </lineage>
</organism>
<evidence type="ECO:0000255" key="1">
    <source>
        <dbReference type="HAMAP-Rule" id="MF_00262"/>
    </source>
</evidence>
<sequence>MALLDFFLSRKKSTANIAKERLQIIVAERRRGDTEPAYLPDMKRDLLGVICKYVQIDPDMLSVQFEQKGDDISVLELNVTLPENEESPK</sequence>
<name>MINE_PROMH</name>
<feature type="chain" id="PRO_1000114233" description="Cell division topological specificity factor">
    <location>
        <begin position="1"/>
        <end position="89"/>
    </location>
</feature>
<dbReference type="EMBL" id="AM942759">
    <property type="protein sequence ID" value="CAR42496.1"/>
    <property type="molecule type" value="Genomic_DNA"/>
</dbReference>
<dbReference type="RefSeq" id="WP_004242781.1">
    <property type="nucleotide sequence ID" value="NC_010554.1"/>
</dbReference>
<dbReference type="SMR" id="B4EVV5"/>
<dbReference type="EnsemblBacteria" id="CAR42496">
    <property type="protein sequence ID" value="CAR42496"/>
    <property type="gene ID" value="PMI1168"/>
</dbReference>
<dbReference type="GeneID" id="6800527"/>
<dbReference type="KEGG" id="pmr:PMI1168"/>
<dbReference type="eggNOG" id="COG0851">
    <property type="taxonomic scope" value="Bacteria"/>
</dbReference>
<dbReference type="HOGENOM" id="CLU_137929_2_2_6"/>
<dbReference type="Proteomes" id="UP000008319">
    <property type="component" value="Chromosome"/>
</dbReference>
<dbReference type="GO" id="GO:0051301">
    <property type="term" value="P:cell division"/>
    <property type="evidence" value="ECO:0007669"/>
    <property type="project" value="UniProtKB-KW"/>
</dbReference>
<dbReference type="GO" id="GO:0032955">
    <property type="term" value="P:regulation of division septum assembly"/>
    <property type="evidence" value="ECO:0007669"/>
    <property type="project" value="InterPro"/>
</dbReference>
<dbReference type="FunFam" id="3.30.1070.10:FF:000001">
    <property type="entry name" value="Cell division topological specificity factor"/>
    <property type="match status" value="1"/>
</dbReference>
<dbReference type="Gene3D" id="3.30.1070.10">
    <property type="entry name" value="Cell division topological specificity factor MinE"/>
    <property type="match status" value="1"/>
</dbReference>
<dbReference type="HAMAP" id="MF_00262">
    <property type="entry name" value="MinE"/>
    <property type="match status" value="1"/>
</dbReference>
<dbReference type="InterPro" id="IPR005527">
    <property type="entry name" value="MinE"/>
</dbReference>
<dbReference type="InterPro" id="IPR036707">
    <property type="entry name" value="MinE_sf"/>
</dbReference>
<dbReference type="NCBIfam" id="TIGR01215">
    <property type="entry name" value="minE"/>
    <property type="match status" value="1"/>
</dbReference>
<dbReference type="NCBIfam" id="NF001422">
    <property type="entry name" value="PRK00296.1"/>
    <property type="match status" value="1"/>
</dbReference>
<dbReference type="Pfam" id="PF03776">
    <property type="entry name" value="MinE"/>
    <property type="match status" value="1"/>
</dbReference>
<dbReference type="SUPFAM" id="SSF55229">
    <property type="entry name" value="Cell division protein MinE topological specificity domain"/>
    <property type="match status" value="1"/>
</dbReference>
<protein>
    <recommendedName>
        <fullName evidence="1">Cell division topological specificity factor</fullName>
    </recommendedName>
</protein>
<reference key="1">
    <citation type="journal article" date="2008" name="J. Bacteriol.">
        <title>Complete genome sequence of uropathogenic Proteus mirabilis, a master of both adherence and motility.</title>
        <authorList>
            <person name="Pearson M.M."/>
            <person name="Sebaihia M."/>
            <person name="Churcher C."/>
            <person name="Quail M.A."/>
            <person name="Seshasayee A.S."/>
            <person name="Luscombe N.M."/>
            <person name="Abdellah Z."/>
            <person name="Arrosmith C."/>
            <person name="Atkin B."/>
            <person name="Chillingworth T."/>
            <person name="Hauser H."/>
            <person name="Jagels K."/>
            <person name="Moule S."/>
            <person name="Mungall K."/>
            <person name="Norbertczak H."/>
            <person name="Rabbinowitsch E."/>
            <person name="Walker D."/>
            <person name="Whithead S."/>
            <person name="Thomson N.R."/>
            <person name="Rather P.N."/>
            <person name="Parkhill J."/>
            <person name="Mobley H.L.T."/>
        </authorList>
    </citation>
    <scope>NUCLEOTIDE SEQUENCE [LARGE SCALE GENOMIC DNA]</scope>
    <source>
        <strain>HI4320</strain>
    </source>
</reference>